<proteinExistence type="evidence at transcript level"/>
<keyword id="KW-0067">ATP-binding</keyword>
<keyword id="KW-0143">Chaperone</keyword>
<keyword id="KW-0963">Cytoplasm</keyword>
<keyword id="KW-0413">Isomerase</keyword>
<keyword id="KW-0547">Nucleotide-binding</keyword>
<keyword id="KW-1185">Reference proteome</keyword>
<keyword id="KW-0346">Stress response</keyword>
<name>CH601_BRADU</name>
<protein>
    <recommendedName>
        <fullName evidence="2">Chaperonin GroEL 1</fullName>
        <ecNumber evidence="2">5.6.1.7</ecNumber>
    </recommendedName>
    <alternativeName>
        <fullName evidence="2">60 kDa chaperonin 1</fullName>
    </alternativeName>
    <alternativeName>
        <fullName evidence="2">Chaperonin-60 1</fullName>
        <shortName evidence="2">Cpn60 1</shortName>
    </alternativeName>
</protein>
<sequence length="540" mass="57550">MAAKEVKFSTDARDRVLRGVDTLANAVKVTLGPKGRNVVIEKSFGAPRITKDGVTVAKEIELEDKFENMGAQMVREVASKTSDLAGDGTTTATVLAQAIVKEGAKSVAAGMNPMDLKRGIDLAVEAIVNDLKAHAKKVTTNEEIAQIATISANGDIEIGRFLADAMQKVGNDGVITVEEAKSLDTELEVVEGMQFDRGYASPYFVTNAEKMRVEFEDPYILIHEKKLSTLQSMLPLLEAVVQSGKPLLVVAEDVEGEALATLVVNRLRGGLKVAAVKAPGFGDRRKAMLEDIAILTGGQAISEDLGIKLENVTLKMLGRAKKVVIDKENTTIVNGAGSKKDIEARVTQIKMQIEETTSDYDREKLQERLAKLAGGVAVIRVGGATEVEVKERKDRVDDAMHATRAAVEEGILPGGGVALLRGLKALDAIKTVNADQKAGVDIVRRAIQVPARQIVQNAGEDGSLVVGKLLENSSYNWGFNAASGEYQDLAKAGVIDPAKVVRTALQDAASVAALLITTEALIAEKPKKSEPAPAAPPMDF</sequence>
<feature type="initiator methionine" description="Removed" evidence="1">
    <location>
        <position position="1"/>
    </location>
</feature>
<feature type="chain" id="PRO_0000063294" description="Chaperonin GroEL 1">
    <location>
        <begin position="2"/>
        <end position="540"/>
    </location>
</feature>
<feature type="binding site" evidence="2">
    <location>
        <begin position="30"/>
        <end position="33"/>
    </location>
    <ligand>
        <name>ATP</name>
        <dbReference type="ChEBI" id="CHEBI:30616"/>
    </ligand>
</feature>
<feature type="binding site" evidence="2">
    <location>
        <position position="51"/>
    </location>
    <ligand>
        <name>ATP</name>
        <dbReference type="ChEBI" id="CHEBI:30616"/>
    </ligand>
</feature>
<feature type="binding site" evidence="2">
    <location>
        <begin position="87"/>
        <end position="91"/>
    </location>
    <ligand>
        <name>ATP</name>
        <dbReference type="ChEBI" id="CHEBI:30616"/>
    </ligand>
</feature>
<feature type="binding site" evidence="2">
    <location>
        <position position="415"/>
    </location>
    <ligand>
        <name>ATP</name>
        <dbReference type="ChEBI" id="CHEBI:30616"/>
    </ligand>
</feature>
<feature type="binding site" evidence="2">
    <location>
        <begin position="480"/>
        <end position="482"/>
    </location>
    <ligand>
        <name>ATP</name>
        <dbReference type="ChEBI" id="CHEBI:30616"/>
    </ligand>
</feature>
<feature type="binding site" evidence="2">
    <location>
        <position position="496"/>
    </location>
    <ligand>
        <name>ATP</name>
        <dbReference type="ChEBI" id="CHEBI:30616"/>
    </ligand>
</feature>
<dbReference type="EC" id="5.6.1.7" evidence="2"/>
<dbReference type="EMBL" id="U55047">
    <property type="protein sequence ID" value="AAC44753.1"/>
    <property type="molecule type" value="Genomic_DNA"/>
</dbReference>
<dbReference type="EMBL" id="BA000040">
    <property type="protein sequence ID" value="BAC50492.1"/>
    <property type="molecule type" value="Genomic_DNA"/>
</dbReference>
<dbReference type="RefSeq" id="NP_771867.1">
    <property type="nucleotide sequence ID" value="NC_004463.1"/>
</dbReference>
<dbReference type="RefSeq" id="WP_011087983.1">
    <property type="nucleotide sequence ID" value="NC_004463.1"/>
</dbReference>
<dbReference type="SMR" id="P77829"/>
<dbReference type="FunCoup" id="P77829">
    <property type="interactions" value="1055"/>
</dbReference>
<dbReference type="STRING" id="224911.AAV28_23515"/>
<dbReference type="EnsemblBacteria" id="BAC50492">
    <property type="protein sequence ID" value="BAC50492"/>
    <property type="gene ID" value="BAC50492"/>
</dbReference>
<dbReference type="GeneID" id="46492224"/>
<dbReference type="KEGG" id="bja:blr5227"/>
<dbReference type="PATRIC" id="fig|224911.44.peg.5113"/>
<dbReference type="eggNOG" id="COG0459">
    <property type="taxonomic scope" value="Bacteria"/>
</dbReference>
<dbReference type="HOGENOM" id="CLU_016503_3_0_5"/>
<dbReference type="InParanoid" id="P77829"/>
<dbReference type="OrthoDB" id="9766614at2"/>
<dbReference type="PhylomeDB" id="P77829"/>
<dbReference type="Proteomes" id="UP000002526">
    <property type="component" value="Chromosome"/>
</dbReference>
<dbReference type="GO" id="GO:1990220">
    <property type="term" value="C:GroEL-GroES complex"/>
    <property type="evidence" value="ECO:0000318"/>
    <property type="project" value="GO_Central"/>
</dbReference>
<dbReference type="GO" id="GO:0005524">
    <property type="term" value="F:ATP binding"/>
    <property type="evidence" value="ECO:0000318"/>
    <property type="project" value="GO_Central"/>
</dbReference>
<dbReference type="GO" id="GO:0140662">
    <property type="term" value="F:ATP-dependent protein folding chaperone"/>
    <property type="evidence" value="ECO:0007669"/>
    <property type="project" value="InterPro"/>
</dbReference>
<dbReference type="GO" id="GO:0016853">
    <property type="term" value="F:isomerase activity"/>
    <property type="evidence" value="ECO:0007669"/>
    <property type="project" value="UniProtKB-KW"/>
</dbReference>
<dbReference type="GO" id="GO:0051082">
    <property type="term" value="F:unfolded protein binding"/>
    <property type="evidence" value="ECO:0000318"/>
    <property type="project" value="GO_Central"/>
</dbReference>
<dbReference type="GO" id="GO:0051085">
    <property type="term" value="P:chaperone cofactor-dependent protein refolding"/>
    <property type="evidence" value="ECO:0000318"/>
    <property type="project" value="GO_Central"/>
</dbReference>
<dbReference type="GO" id="GO:0042026">
    <property type="term" value="P:protein refolding"/>
    <property type="evidence" value="ECO:0007669"/>
    <property type="project" value="UniProtKB-UniRule"/>
</dbReference>
<dbReference type="GO" id="GO:0009408">
    <property type="term" value="P:response to heat"/>
    <property type="evidence" value="ECO:0000318"/>
    <property type="project" value="GO_Central"/>
</dbReference>
<dbReference type="CDD" id="cd03344">
    <property type="entry name" value="GroEL"/>
    <property type="match status" value="1"/>
</dbReference>
<dbReference type="FunFam" id="1.10.560.10:FF:000001">
    <property type="entry name" value="60 kDa chaperonin"/>
    <property type="match status" value="1"/>
</dbReference>
<dbReference type="FunFam" id="3.50.7.10:FF:000001">
    <property type="entry name" value="60 kDa chaperonin"/>
    <property type="match status" value="1"/>
</dbReference>
<dbReference type="Gene3D" id="3.50.7.10">
    <property type="entry name" value="GroEL"/>
    <property type="match status" value="1"/>
</dbReference>
<dbReference type="Gene3D" id="1.10.560.10">
    <property type="entry name" value="GroEL-like equatorial domain"/>
    <property type="match status" value="1"/>
</dbReference>
<dbReference type="Gene3D" id="3.30.260.10">
    <property type="entry name" value="TCP-1-like chaperonin intermediate domain"/>
    <property type="match status" value="1"/>
</dbReference>
<dbReference type="HAMAP" id="MF_00600">
    <property type="entry name" value="CH60"/>
    <property type="match status" value="1"/>
</dbReference>
<dbReference type="InterPro" id="IPR018370">
    <property type="entry name" value="Chaperonin_Cpn60_CS"/>
</dbReference>
<dbReference type="InterPro" id="IPR001844">
    <property type="entry name" value="Cpn60/GroEL"/>
</dbReference>
<dbReference type="InterPro" id="IPR002423">
    <property type="entry name" value="Cpn60/GroEL/TCP-1"/>
</dbReference>
<dbReference type="InterPro" id="IPR027409">
    <property type="entry name" value="GroEL-like_apical_dom_sf"/>
</dbReference>
<dbReference type="InterPro" id="IPR027413">
    <property type="entry name" value="GROEL-like_equatorial_sf"/>
</dbReference>
<dbReference type="InterPro" id="IPR027410">
    <property type="entry name" value="TCP-1-like_intermed_sf"/>
</dbReference>
<dbReference type="NCBIfam" id="TIGR02348">
    <property type="entry name" value="GroEL"/>
    <property type="match status" value="1"/>
</dbReference>
<dbReference type="NCBIfam" id="NF000592">
    <property type="entry name" value="PRK00013.1"/>
    <property type="match status" value="1"/>
</dbReference>
<dbReference type="NCBIfam" id="NF009487">
    <property type="entry name" value="PRK12849.1"/>
    <property type="match status" value="1"/>
</dbReference>
<dbReference type="NCBIfam" id="NF009488">
    <property type="entry name" value="PRK12850.1"/>
    <property type="match status" value="1"/>
</dbReference>
<dbReference type="NCBIfam" id="NF009489">
    <property type="entry name" value="PRK12851.1"/>
    <property type="match status" value="1"/>
</dbReference>
<dbReference type="PANTHER" id="PTHR45633">
    <property type="entry name" value="60 KDA HEAT SHOCK PROTEIN, MITOCHONDRIAL"/>
    <property type="match status" value="1"/>
</dbReference>
<dbReference type="Pfam" id="PF00118">
    <property type="entry name" value="Cpn60_TCP1"/>
    <property type="match status" value="1"/>
</dbReference>
<dbReference type="PRINTS" id="PR00298">
    <property type="entry name" value="CHAPERONIN60"/>
</dbReference>
<dbReference type="SUPFAM" id="SSF52029">
    <property type="entry name" value="GroEL apical domain-like"/>
    <property type="match status" value="1"/>
</dbReference>
<dbReference type="SUPFAM" id="SSF48592">
    <property type="entry name" value="GroEL equatorial domain-like"/>
    <property type="match status" value="1"/>
</dbReference>
<dbReference type="SUPFAM" id="SSF54849">
    <property type="entry name" value="GroEL-intermediate domain like"/>
    <property type="match status" value="1"/>
</dbReference>
<dbReference type="PROSITE" id="PS00296">
    <property type="entry name" value="CHAPERONINS_CPN60"/>
    <property type="match status" value="1"/>
</dbReference>
<comment type="function">
    <text evidence="2">Together with its co-chaperonin GroES, plays an essential role in assisting protein folding. The GroEL-GroES system forms a nano-cage that allows encapsulation of the non-native substrate proteins and provides a physical environment optimized to promote and accelerate protein folding.</text>
</comment>
<comment type="catalytic activity">
    <reaction evidence="2">
        <text>ATP + H2O + a folded polypeptide = ADP + phosphate + an unfolded polypeptide.</text>
        <dbReference type="EC" id="5.6.1.7"/>
    </reaction>
</comment>
<comment type="subunit">
    <text evidence="2">Forms a cylinder of 14 subunits composed of two heptameric rings stacked back-to-back. Interacts with the co-chaperonin GroES.</text>
</comment>
<comment type="subcellular location">
    <subcellularLocation>
        <location evidence="2">Cytoplasm</location>
    </subcellularLocation>
</comment>
<comment type="induction">
    <text>By heat shock.</text>
</comment>
<comment type="similarity">
    <text evidence="2">Belongs to the chaperonin (HSP60) family.</text>
</comment>
<gene>
    <name evidence="2" type="primary">groEL1</name>
    <name evidence="2" type="synonym">groL1</name>
    <name type="ordered locus">blr5227</name>
</gene>
<reference key="1">
    <citation type="journal article" date="1996" name="J. Bacteriol.">
        <title>The Bradyrhizobium japonicum rpoH1 gene encoding a sigma 32-like protein is part of a unique heat shock gene cluster together with groESL1 and three small heat shock genes.</title>
        <authorList>
            <person name="Narberhaus F."/>
            <person name="Weiglhofer W."/>
            <person name="Fischer H.-M."/>
            <person name="Hennecke H."/>
        </authorList>
    </citation>
    <scope>NUCLEOTIDE SEQUENCE [GENOMIC DNA]</scope>
</reference>
<reference key="2">
    <citation type="journal article" date="2002" name="DNA Res.">
        <title>Complete genomic sequence of nitrogen-fixing symbiotic bacterium Bradyrhizobium japonicum USDA110.</title>
        <authorList>
            <person name="Kaneko T."/>
            <person name="Nakamura Y."/>
            <person name="Sato S."/>
            <person name="Minamisawa K."/>
            <person name="Uchiumi T."/>
            <person name="Sasamoto S."/>
            <person name="Watanabe A."/>
            <person name="Idesawa K."/>
            <person name="Iriguchi M."/>
            <person name="Kawashima K."/>
            <person name="Kohara M."/>
            <person name="Matsumoto M."/>
            <person name="Shimpo S."/>
            <person name="Tsuruoka H."/>
            <person name="Wada T."/>
            <person name="Yamada M."/>
            <person name="Tabata S."/>
        </authorList>
    </citation>
    <scope>NUCLEOTIDE SEQUENCE [LARGE SCALE GENOMIC DNA]</scope>
    <source>
        <strain>JCM 10833 / BCRC 13528 / IAM 13628 / NBRC 14792 / USDA 110</strain>
    </source>
</reference>
<accession>P77829</accession>
<evidence type="ECO:0000250" key="1"/>
<evidence type="ECO:0000255" key="2">
    <source>
        <dbReference type="HAMAP-Rule" id="MF_00600"/>
    </source>
</evidence>
<organism>
    <name type="scientific">Bradyrhizobium diazoefficiens (strain JCM 10833 / BCRC 13528 / IAM 13628 / NBRC 14792 / USDA 110)</name>
    <dbReference type="NCBI Taxonomy" id="224911"/>
    <lineage>
        <taxon>Bacteria</taxon>
        <taxon>Pseudomonadati</taxon>
        <taxon>Pseudomonadota</taxon>
        <taxon>Alphaproteobacteria</taxon>
        <taxon>Hyphomicrobiales</taxon>
        <taxon>Nitrobacteraceae</taxon>
        <taxon>Bradyrhizobium</taxon>
    </lineage>
</organism>